<comment type="function">
    <text evidence="1">Part of the energy-coupling factor (ECF) transporter complex CbiMNOQ involved in cobalt import.</text>
</comment>
<comment type="pathway">
    <text evidence="1">Cofactor biosynthesis; adenosylcobalamin biosynthesis.</text>
</comment>
<comment type="subunit">
    <text evidence="1">Forms an energy-coupling factor (ECF) transporter complex composed of an ATP-binding protein (A component, CbiO), a transmembrane protein (T component, CbiQ) and 2 possible substrate-capture proteins (S components, CbiM and CbiN) of unknown stoichimetry.</text>
</comment>
<comment type="subcellular location">
    <subcellularLocation>
        <location evidence="1">Cell membrane</location>
        <topology evidence="1">Multi-pass membrane protein</topology>
    </subcellularLocation>
</comment>
<comment type="similarity">
    <text evidence="1">Belongs to the CbiN family.</text>
</comment>
<proteinExistence type="inferred from homology"/>
<feature type="chain" id="PRO_0000134702" description="Cobalt transport protein CbiN">
    <location>
        <begin position="1"/>
        <end position="95"/>
    </location>
</feature>
<feature type="transmembrane region" description="Helical" evidence="1">
    <location>
        <begin position="5"/>
        <end position="25"/>
    </location>
</feature>
<feature type="transmembrane region" description="Helical" evidence="1">
    <location>
        <begin position="67"/>
        <end position="87"/>
    </location>
</feature>
<sequence length="95" mass="10428">METKHIILLAIVAIIIALPLIIYAGKGEEEGYFGGSDDQGCEVVEELGYKPWFHPIWEPPSGEIESLLFALQAAIGAIIIGYYIGYYNAKRQVAA</sequence>
<name>CBIN_METJA</name>
<keyword id="KW-1003">Cell membrane</keyword>
<keyword id="KW-0169">Cobalamin biosynthesis</keyword>
<keyword id="KW-0170">Cobalt</keyword>
<keyword id="KW-0171">Cobalt transport</keyword>
<keyword id="KW-0406">Ion transport</keyword>
<keyword id="KW-0472">Membrane</keyword>
<keyword id="KW-1185">Reference proteome</keyword>
<keyword id="KW-0812">Transmembrane</keyword>
<keyword id="KW-1133">Transmembrane helix</keyword>
<keyword id="KW-0813">Transport</keyword>
<evidence type="ECO:0000255" key="1">
    <source>
        <dbReference type="HAMAP-Rule" id="MF_00330"/>
    </source>
</evidence>
<accession>Q58490</accession>
<reference key="1">
    <citation type="journal article" date="1996" name="Science">
        <title>Complete genome sequence of the methanogenic archaeon, Methanococcus jannaschii.</title>
        <authorList>
            <person name="Bult C.J."/>
            <person name="White O."/>
            <person name="Olsen G.J."/>
            <person name="Zhou L."/>
            <person name="Fleischmann R.D."/>
            <person name="Sutton G.G."/>
            <person name="Blake J.A."/>
            <person name="FitzGerald L.M."/>
            <person name="Clayton R.A."/>
            <person name="Gocayne J.D."/>
            <person name="Kerlavage A.R."/>
            <person name="Dougherty B.A."/>
            <person name="Tomb J.-F."/>
            <person name="Adams M.D."/>
            <person name="Reich C.I."/>
            <person name="Overbeek R."/>
            <person name="Kirkness E.F."/>
            <person name="Weinstock K.G."/>
            <person name="Merrick J.M."/>
            <person name="Glodek A."/>
            <person name="Scott J.L."/>
            <person name="Geoghagen N.S.M."/>
            <person name="Weidman J.F."/>
            <person name="Fuhrmann J.L."/>
            <person name="Nguyen D."/>
            <person name="Utterback T.R."/>
            <person name="Kelley J.M."/>
            <person name="Peterson J.D."/>
            <person name="Sadow P.W."/>
            <person name="Hanna M.C."/>
            <person name="Cotton M.D."/>
            <person name="Roberts K.M."/>
            <person name="Hurst M.A."/>
            <person name="Kaine B.P."/>
            <person name="Borodovsky M."/>
            <person name="Klenk H.-P."/>
            <person name="Fraser C.M."/>
            <person name="Smith H.O."/>
            <person name="Woese C.R."/>
            <person name="Venter J.C."/>
        </authorList>
    </citation>
    <scope>NUCLEOTIDE SEQUENCE [LARGE SCALE GENOMIC DNA]</scope>
    <source>
        <strain>ATCC 43067 / DSM 2661 / JAL-1 / JCM 10045 / NBRC 100440</strain>
    </source>
</reference>
<gene>
    <name evidence="1" type="primary">cbiN</name>
    <name type="ordered locus">MJ1090</name>
</gene>
<dbReference type="EMBL" id="L77117">
    <property type="protein sequence ID" value="AAB99091.1"/>
    <property type="molecule type" value="Genomic_DNA"/>
</dbReference>
<dbReference type="PIR" id="A64436">
    <property type="entry name" value="A64436"/>
</dbReference>
<dbReference type="RefSeq" id="WP_010870602.1">
    <property type="nucleotide sequence ID" value="NC_000909.1"/>
</dbReference>
<dbReference type="STRING" id="243232.MJ_1090"/>
<dbReference type="PaxDb" id="243232-MJ_1090"/>
<dbReference type="EnsemblBacteria" id="AAB99091">
    <property type="protein sequence ID" value="AAB99091"/>
    <property type="gene ID" value="MJ_1090"/>
</dbReference>
<dbReference type="GeneID" id="1451986"/>
<dbReference type="KEGG" id="mja:MJ_1090"/>
<dbReference type="eggNOG" id="arCOG04384">
    <property type="taxonomic scope" value="Archaea"/>
</dbReference>
<dbReference type="HOGENOM" id="CLU_136197_2_0_2"/>
<dbReference type="InParanoid" id="Q58490"/>
<dbReference type="OrthoDB" id="187156at2157"/>
<dbReference type="PhylomeDB" id="Q58490"/>
<dbReference type="UniPathway" id="UPA00148"/>
<dbReference type="Proteomes" id="UP000000805">
    <property type="component" value="Chromosome"/>
</dbReference>
<dbReference type="GO" id="GO:0005886">
    <property type="term" value="C:plasma membrane"/>
    <property type="evidence" value="ECO:0007669"/>
    <property type="project" value="UniProtKB-SubCell"/>
</dbReference>
<dbReference type="GO" id="GO:0015087">
    <property type="term" value="F:cobalt ion transmembrane transporter activity"/>
    <property type="evidence" value="ECO:0007669"/>
    <property type="project" value="UniProtKB-UniRule"/>
</dbReference>
<dbReference type="GO" id="GO:0009236">
    <property type="term" value="P:cobalamin biosynthetic process"/>
    <property type="evidence" value="ECO:0007669"/>
    <property type="project" value="UniProtKB-UniRule"/>
</dbReference>
<dbReference type="HAMAP" id="MF_00330">
    <property type="entry name" value="CbiN"/>
    <property type="match status" value="1"/>
</dbReference>
<dbReference type="InterPro" id="IPR003705">
    <property type="entry name" value="CbiN"/>
</dbReference>
<dbReference type="NCBIfam" id="TIGR01165">
    <property type="entry name" value="cbiN"/>
    <property type="match status" value="1"/>
</dbReference>
<dbReference type="NCBIfam" id="NF002780">
    <property type="entry name" value="PRK02898.1"/>
    <property type="match status" value="1"/>
</dbReference>
<dbReference type="PANTHER" id="PTHR38662">
    <property type="entry name" value="COBALT TRANSPORT PROTEIN CBIN"/>
    <property type="match status" value="1"/>
</dbReference>
<dbReference type="PANTHER" id="PTHR38662:SF1">
    <property type="entry name" value="COBALT TRANSPORT PROTEIN CBIN"/>
    <property type="match status" value="1"/>
</dbReference>
<dbReference type="Pfam" id="PF02553">
    <property type="entry name" value="CbiN"/>
    <property type="match status" value="1"/>
</dbReference>
<protein>
    <recommendedName>
        <fullName evidence="1">Cobalt transport protein CbiN</fullName>
    </recommendedName>
    <alternativeName>
        <fullName evidence="1">Energy-coupling factor transporter probable substrate-capture protein CbiN</fullName>
        <shortName evidence="1">ECF transporter S component CbiN</shortName>
    </alternativeName>
</protein>
<organism>
    <name type="scientific">Methanocaldococcus jannaschii (strain ATCC 43067 / DSM 2661 / JAL-1 / JCM 10045 / NBRC 100440)</name>
    <name type="common">Methanococcus jannaschii</name>
    <dbReference type="NCBI Taxonomy" id="243232"/>
    <lineage>
        <taxon>Archaea</taxon>
        <taxon>Methanobacteriati</taxon>
        <taxon>Methanobacteriota</taxon>
        <taxon>Methanomada group</taxon>
        <taxon>Methanococci</taxon>
        <taxon>Methanococcales</taxon>
        <taxon>Methanocaldococcaceae</taxon>
        <taxon>Methanocaldococcus</taxon>
    </lineage>
</organism>